<name>DAPF_CAMJE</name>
<keyword id="KW-0028">Amino-acid biosynthesis</keyword>
<keyword id="KW-0963">Cytoplasm</keyword>
<keyword id="KW-0413">Isomerase</keyword>
<keyword id="KW-0457">Lysine biosynthesis</keyword>
<keyword id="KW-1185">Reference proteome</keyword>
<dbReference type="EC" id="5.1.1.7" evidence="1"/>
<dbReference type="EMBL" id="AL111168">
    <property type="protein sequence ID" value="CAL35631.1"/>
    <property type="molecule type" value="Genomic_DNA"/>
</dbReference>
<dbReference type="PIR" id="A81300">
    <property type="entry name" value="A81300"/>
</dbReference>
<dbReference type="RefSeq" id="WP_002851173.1">
    <property type="nucleotide sequence ID" value="NZ_SZUC01000003.1"/>
</dbReference>
<dbReference type="RefSeq" id="YP_002344903.1">
    <property type="nucleotide sequence ID" value="NC_002163.1"/>
</dbReference>
<dbReference type="SMR" id="Q9PMD8"/>
<dbReference type="STRING" id="192222.Cj1531"/>
<dbReference type="PaxDb" id="192222-Cj1531"/>
<dbReference type="EnsemblBacteria" id="CAL35631">
    <property type="protein sequence ID" value="CAL35631"/>
    <property type="gene ID" value="Cj1531"/>
</dbReference>
<dbReference type="GeneID" id="905812"/>
<dbReference type="KEGG" id="cje:Cj1531"/>
<dbReference type="PATRIC" id="fig|192222.6.peg.1508"/>
<dbReference type="eggNOG" id="COG0253">
    <property type="taxonomic scope" value="Bacteria"/>
</dbReference>
<dbReference type="HOGENOM" id="CLU_053306_3_2_7"/>
<dbReference type="OrthoDB" id="9805408at2"/>
<dbReference type="UniPathway" id="UPA00034">
    <property type="reaction ID" value="UER00025"/>
</dbReference>
<dbReference type="Proteomes" id="UP000000799">
    <property type="component" value="Chromosome"/>
</dbReference>
<dbReference type="GO" id="GO:0005829">
    <property type="term" value="C:cytosol"/>
    <property type="evidence" value="ECO:0007669"/>
    <property type="project" value="TreeGrafter"/>
</dbReference>
<dbReference type="GO" id="GO:0008837">
    <property type="term" value="F:diaminopimelate epimerase activity"/>
    <property type="evidence" value="ECO:0007669"/>
    <property type="project" value="UniProtKB-UniRule"/>
</dbReference>
<dbReference type="GO" id="GO:0009089">
    <property type="term" value="P:lysine biosynthetic process via diaminopimelate"/>
    <property type="evidence" value="ECO:0007669"/>
    <property type="project" value="UniProtKB-UniRule"/>
</dbReference>
<dbReference type="Gene3D" id="3.10.310.10">
    <property type="entry name" value="Diaminopimelate Epimerase, Chain A, domain 1"/>
    <property type="match status" value="2"/>
</dbReference>
<dbReference type="HAMAP" id="MF_00197">
    <property type="entry name" value="DAP_epimerase"/>
    <property type="match status" value="1"/>
</dbReference>
<dbReference type="InterPro" id="IPR018510">
    <property type="entry name" value="DAP_epimerase_AS"/>
</dbReference>
<dbReference type="InterPro" id="IPR001653">
    <property type="entry name" value="DAP_epimerase_DapF"/>
</dbReference>
<dbReference type="NCBIfam" id="TIGR00652">
    <property type="entry name" value="DapF"/>
    <property type="match status" value="1"/>
</dbReference>
<dbReference type="PANTHER" id="PTHR31689:SF0">
    <property type="entry name" value="DIAMINOPIMELATE EPIMERASE"/>
    <property type="match status" value="1"/>
</dbReference>
<dbReference type="PANTHER" id="PTHR31689">
    <property type="entry name" value="DIAMINOPIMELATE EPIMERASE, CHLOROPLASTIC"/>
    <property type="match status" value="1"/>
</dbReference>
<dbReference type="Pfam" id="PF01678">
    <property type="entry name" value="DAP_epimerase"/>
    <property type="match status" value="2"/>
</dbReference>
<dbReference type="SUPFAM" id="SSF54506">
    <property type="entry name" value="Diaminopimelate epimerase-like"/>
    <property type="match status" value="2"/>
</dbReference>
<dbReference type="PROSITE" id="PS01326">
    <property type="entry name" value="DAP_EPIMERASE"/>
    <property type="match status" value="1"/>
</dbReference>
<comment type="function">
    <text evidence="1">Catalyzes the stereoinversion of LL-2,6-diaminopimelate (L,L-DAP) to meso-diaminopimelate (meso-DAP), a precursor of L-lysine and an essential component of the bacterial peptidoglycan.</text>
</comment>
<comment type="catalytic activity">
    <reaction evidence="1">
        <text>(2S,6S)-2,6-diaminopimelate = meso-2,6-diaminopimelate</text>
        <dbReference type="Rhea" id="RHEA:15393"/>
        <dbReference type="ChEBI" id="CHEBI:57609"/>
        <dbReference type="ChEBI" id="CHEBI:57791"/>
        <dbReference type="EC" id="5.1.1.7"/>
    </reaction>
</comment>
<comment type="pathway">
    <text evidence="1">Amino-acid biosynthesis; L-lysine biosynthesis via DAP pathway; DL-2,6-diaminopimelate from LL-2,6-diaminopimelate: step 1/1.</text>
</comment>
<comment type="subunit">
    <text evidence="1">Homodimer.</text>
</comment>
<comment type="subcellular location">
    <subcellularLocation>
        <location evidence="1">Cytoplasm</location>
    </subcellularLocation>
</comment>
<comment type="similarity">
    <text evidence="1">Belongs to the diaminopimelate epimerase family.</text>
</comment>
<sequence>MKFYKYCASGNDFVITNADRKEDRSALAKELCNRYEGIGADGFIVILPHEKYDFEWEFYNNDGSRAAMCGNGSRAAAHFAHHINKINPNMSFLTGAGIIKAKVNQDKVEVSLGKIKSVQNTFEELGKTWQLCNTGVPHLVHFCQNLDEFDTMLCQKMRQKYNANVNFVKILDENHLKVRTYERGVEDETLACGTGMGACFYLAFLNKKVQNKVKITPKSGEEVGFAYKNEELFFEGKVKYCFEANYNFF</sequence>
<proteinExistence type="inferred from homology"/>
<protein>
    <recommendedName>
        <fullName evidence="1">Diaminopimelate epimerase</fullName>
        <shortName evidence="1">DAP epimerase</shortName>
        <ecNumber evidence="1">5.1.1.7</ecNumber>
    </recommendedName>
    <alternativeName>
        <fullName evidence="1">PLP-independent amino acid racemase</fullName>
    </alternativeName>
</protein>
<organism>
    <name type="scientific">Campylobacter jejuni subsp. jejuni serotype O:2 (strain ATCC 700819 / NCTC 11168)</name>
    <dbReference type="NCBI Taxonomy" id="192222"/>
    <lineage>
        <taxon>Bacteria</taxon>
        <taxon>Pseudomonadati</taxon>
        <taxon>Campylobacterota</taxon>
        <taxon>Epsilonproteobacteria</taxon>
        <taxon>Campylobacterales</taxon>
        <taxon>Campylobacteraceae</taxon>
        <taxon>Campylobacter</taxon>
    </lineage>
</organism>
<gene>
    <name evidence="1" type="primary">dapF</name>
    <name type="ordered locus">Cj1531</name>
</gene>
<accession>Q9PMD8</accession>
<accession>Q0P894</accession>
<feature type="chain" id="PRO_0000149828" description="Diaminopimelate epimerase">
    <location>
        <begin position="1"/>
        <end position="249"/>
    </location>
</feature>
<feature type="active site" description="Proton donor" evidence="1">
    <location>
        <position position="69"/>
    </location>
</feature>
<feature type="active site" description="Proton acceptor" evidence="1">
    <location>
        <position position="192"/>
    </location>
</feature>
<feature type="binding site" evidence="1">
    <location>
        <position position="11"/>
    </location>
    <ligand>
        <name>substrate</name>
    </ligand>
</feature>
<feature type="binding site" evidence="1">
    <location>
        <position position="60"/>
    </location>
    <ligand>
        <name>substrate</name>
    </ligand>
</feature>
<feature type="binding site" evidence="1">
    <location>
        <begin position="70"/>
        <end position="71"/>
    </location>
    <ligand>
        <name>substrate</name>
    </ligand>
</feature>
<feature type="binding site" evidence="1">
    <location>
        <position position="164"/>
    </location>
    <ligand>
        <name>substrate</name>
    </ligand>
</feature>
<feature type="binding site" evidence="1">
    <location>
        <begin position="182"/>
        <end position="183"/>
    </location>
    <ligand>
        <name>substrate</name>
    </ligand>
</feature>
<feature type="binding site" evidence="1">
    <location>
        <begin position="193"/>
        <end position="194"/>
    </location>
    <ligand>
        <name>substrate</name>
    </ligand>
</feature>
<feature type="site" description="Could be important to modulate the pK values of the two catalytic cysteine residues" evidence="1">
    <location>
        <position position="138"/>
    </location>
</feature>
<feature type="site" description="Could be important to modulate the pK values of the two catalytic cysteine residues" evidence="1">
    <location>
        <position position="182"/>
    </location>
</feature>
<evidence type="ECO:0000255" key="1">
    <source>
        <dbReference type="HAMAP-Rule" id="MF_00197"/>
    </source>
</evidence>
<reference key="1">
    <citation type="journal article" date="2000" name="Nature">
        <title>The genome sequence of the food-borne pathogen Campylobacter jejuni reveals hypervariable sequences.</title>
        <authorList>
            <person name="Parkhill J."/>
            <person name="Wren B.W."/>
            <person name="Mungall K.L."/>
            <person name="Ketley J.M."/>
            <person name="Churcher C.M."/>
            <person name="Basham D."/>
            <person name="Chillingworth T."/>
            <person name="Davies R.M."/>
            <person name="Feltwell T."/>
            <person name="Holroyd S."/>
            <person name="Jagels K."/>
            <person name="Karlyshev A.V."/>
            <person name="Moule S."/>
            <person name="Pallen M.J."/>
            <person name="Penn C.W."/>
            <person name="Quail M.A."/>
            <person name="Rajandream M.A."/>
            <person name="Rutherford K.M."/>
            <person name="van Vliet A.H.M."/>
            <person name="Whitehead S."/>
            <person name="Barrell B.G."/>
        </authorList>
    </citation>
    <scope>NUCLEOTIDE SEQUENCE [LARGE SCALE GENOMIC DNA]</scope>
    <source>
        <strain>ATCC 700819 / NCTC 11168</strain>
    </source>
</reference>